<feature type="chain" id="PRO_1000122876" description="Sulfurtransferase TusD">
    <location>
        <begin position="1"/>
        <end position="128"/>
    </location>
</feature>
<feature type="active site" description="Cysteine persulfide intermediate" evidence="1">
    <location>
        <position position="78"/>
    </location>
</feature>
<accession>B2U2V2</accession>
<comment type="function">
    <text evidence="1">Part of a sulfur-relay system required for 2-thiolation of 5-methylaminomethyl-2-thiouridine (mnm(5)s(2)U) at tRNA wobble positions. Accepts sulfur from TusA and transfers it in turn to TusE.</text>
</comment>
<comment type="subunit">
    <text evidence="1">Heterohexamer, formed by a dimer of trimers. The hexameric TusBCD complex contains 2 copies each of TusB, TusC and TusD. The TusBCD complex interacts with TusE.</text>
</comment>
<comment type="subcellular location">
    <subcellularLocation>
        <location evidence="1">Cytoplasm</location>
    </subcellularLocation>
</comment>
<comment type="similarity">
    <text evidence="1">Belongs to the DsrE/TusD family.</text>
</comment>
<evidence type="ECO:0000255" key="1">
    <source>
        <dbReference type="HAMAP-Rule" id="MF_00390"/>
    </source>
</evidence>
<organism>
    <name type="scientific">Shigella boydii serotype 18 (strain CDC 3083-94 / BS512)</name>
    <dbReference type="NCBI Taxonomy" id="344609"/>
    <lineage>
        <taxon>Bacteria</taxon>
        <taxon>Pseudomonadati</taxon>
        <taxon>Pseudomonadota</taxon>
        <taxon>Gammaproteobacteria</taxon>
        <taxon>Enterobacterales</taxon>
        <taxon>Enterobacteriaceae</taxon>
        <taxon>Shigella</taxon>
    </lineage>
</organism>
<keyword id="KW-0963">Cytoplasm</keyword>
<keyword id="KW-1185">Reference proteome</keyword>
<keyword id="KW-0808">Transferase</keyword>
<keyword id="KW-0819">tRNA processing</keyword>
<reference key="1">
    <citation type="submission" date="2008-05" db="EMBL/GenBank/DDBJ databases">
        <title>Complete sequence of Shigella boydii serotype 18 strain BS512.</title>
        <authorList>
            <person name="Rasko D.A."/>
            <person name="Rosovitz M."/>
            <person name="Maurelli A.T."/>
            <person name="Myers G."/>
            <person name="Seshadri R."/>
            <person name="Cer R."/>
            <person name="Jiang L."/>
            <person name="Ravel J."/>
            <person name="Sebastian Y."/>
        </authorList>
    </citation>
    <scope>NUCLEOTIDE SEQUENCE [LARGE SCALE GENOMIC DNA]</scope>
    <source>
        <strain>CDC 3083-94 / BS512</strain>
    </source>
</reference>
<protein>
    <recommendedName>
        <fullName evidence="1">Sulfurtransferase TusD</fullName>
        <ecNumber evidence="1">2.8.1.-</ecNumber>
    </recommendedName>
    <alternativeName>
        <fullName evidence="1">tRNA 2-thiouridine synthesizing protein D</fullName>
    </alternativeName>
</protein>
<proteinExistence type="inferred from homology"/>
<dbReference type="EC" id="2.8.1.-" evidence="1"/>
<dbReference type="EMBL" id="CP001063">
    <property type="protein sequence ID" value="ACD10119.1"/>
    <property type="molecule type" value="Genomic_DNA"/>
</dbReference>
<dbReference type="RefSeq" id="WP_001209714.1">
    <property type="nucleotide sequence ID" value="NC_010658.1"/>
</dbReference>
<dbReference type="SMR" id="B2U2V2"/>
<dbReference type="STRING" id="344609.SbBS512_E3719"/>
<dbReference type="KEGG" id="sbc:SbBS512_E3719"/>
<dbReference type="HOGENOM" id="CLU_132095_0_0_6"/>
<dbReference type="Proteomes" id="UP000001030">
    <property type="component" value="Chromosome"/>
</dbReference>
<dbReference type="GO" id="GO:1990228">
    <property type="term" value="C:sulfurtransferase complex"/>
    <property type="evidence" value="ECO:0007669"/>
    <property type="project" value="TreeGrafter"/>
</dbReference>
<dbReference type="GO" id="GO:0097163">
    <property type="term" value="F:sulfur carrier activity"/>
    <property type="evidence" value="ECO:0007669"/>
    <property type="project" value="TreeGrafter"/>
</dbReference>
<dbReference type="GO" id="GO:0016783">
    <property type="term" value="F:sulfurtransferase activity"/>
    <property type="evidence" value="ECO:0007669"/>
    <property type="project" value="UniProtKB-UniRule"/>
</dbReference>
<dbReference type="GO" id="GO:0002143">
    <property type="term" value="P:tRNA wobble position uridine thiolation"/>
    <property type="evidence" value="ECO:0007669"/>
    <property type="project" value="TreeGrafter"/>
</dbReference>
<dbReference type="FunFam" id="3.40.1260.10:FF:000001">
    <property type="entry name" value="Sulfurtransferase TusD"/>
    <property type="match status" value="1"/>
</dbReference>
<dbReference type="Gene3D" id="3.40.1260.10">
    <property type="entry name" value="DsrEFH-like"/>
    <property type="match status" value="1"/>
</dbReference>
<dbReference type="HAMAP" id="MF_00390">
    <property type="entry name" value="Thiourid_synth_D"/>
    <property type="match status" value="1"/>
</dbReference>
<dbReference type="InterPro" id="IPR027396">
    <property type="entry name" value="DsrEFH-like"/>
</dbReference>
<dbReference type="InterPro" id="IPR003787">
    <property type="entry name" value="Sulphur_relay_DsrE/F-like"/>
</dbReference>
<dbReference type="InterPro" id="IPR017463">
    <property type="entry name" value="Sulphur_relay_TusD/DsrE"/>
</dbReference>
<dbReference type="NCBIfam" id="NF001237">
    <property type="entry name" value="PRK00207.1"/>
    <property type="match status" value="1"/>
</dbReference>
<dbReference type="NCBIfam" id="TIGR03012">
    <property type="entry name" value="sulf_tusD_dsrE"/>
    <property type="match status" value="1"/>
</dbReference>
<dbReference type="PANTHER" id="PTHR34874">
    <property type="entry name" value="PROTEIN YCHN"/>
    <property type="match status" value="1"/>
</dbReference>
<dbReference type="PANTHER" id="PTHR34874:SF3">
    <property type="entry name" value="SULFURTRANSFERASE TUSD"/>
    <property type="match status" value="1"/>
</dbReference>
<dbReference type="Pfam" id="PF02635">
    <property type="entry name" value="DsrE"/>
    <property type="match status" value="1"/>
</dbReference>
<dbReference type="SUPFAM" id="SSF75169">
    <property type="entry name" value="DsrEFH-like"/>
    <property type="match status" value="1"/>
</dbReference>
<sequence>MRFAIVVTGPAYGTQQASSAFQFAQALIVEGHELSSVFFYRGGVYNANQLTSPASDEFDLVRGWQQLNAQHGVALNICVAAALRRGIVDETEAGRLGLASSNLQPGFTLSGLGALAEASLTCDRVVQF</sequence>
<gene>
    <name evidence="1" type="primary">tusD</name>
    <name type="ordered locus">SbBS512_E3719</name>
</gene>
<name>TUSD_SHIB3</name>